<gene>
    <name evidence="1" type="primary">hemL</name>
    <name type="ordered locus">sce9167</name>
</gene>
<reference key="1">
    <citation type="journal article" date="2007" name="Nat. Biotechnol.">
        <title>Complete genome sequence of the myxobacterium Sorangium cellulosum.</title>
        <authorList>
            <person name="Schneiker S."/>
            <person name="Perlova O."/>
            <person name="Kaiser O."/>
            <person name="Gerth K."/>
            <person name="Alici A."/>
            <person name="Altmeyer M.O."/>
            <person name="Bartels D."/>
            <person name="Bekel T."/>
            <person name="Beyer S."/>
            <person name="Bode E."/>
            <person name="Bode H.B."/>
            <person name="Bolten C.J."/>
            <person name="Choudhuri J.V."/>
            <person name="Doss S."/>
            <person name="Elnakady Y.A."/>
            <person name="Frank B."/>
            <person name="Gaigalat L."/>
            <person name="Goesmann A."/>
            <person name="Groeger C."/>
            <person name="Gross F."/>
            <person name="Jelsbak L."/>
            <person name="Jelsbak L."/>
            <person name="Kalinowski J."/>
            <person name="Kegler C."/>
            <person name="Knauber T."/>
            <person name="Konietzny S."/>
            <person name="Kopp M."/>
            <person name="Krause L."/>
            <person name="Krug D."/>
            <person name="Linke B."/>
            <person name="Mahmud T."/>
            <person name="Martinez-Arias R."/>
            <person name="McHardy A.C."/>
            <person name="Merai M."/>
            <person name="Meyer F."/>
            <person name="Mormann S."/>
            <person name="Munoz-Dorado J."/>
            <person name="Perez J."/>
            <person name="Pradella S."/>
            <person name="Rachid S."/>
            <person name="Raddatz G."/>
            <person name="Rosenau F."/>
            <person name="Rueckert C."/>
            <person name="Sasse F."/>
            <person name="Scharfe M."/>
            <person name="Schuster S.C."/>
            <person name="Suen G."/>
            <person name="Treuner-Lange A."/>
            <person name="Velicer G.J."/>
            <person name="Vorholter F.-J."/>
            <person name="Weissman K.J."/>
            <person name="Welch R.D."/>
            <person name="Wenzel S.C."/>
            <person name="Whitworth D.E."/>
            <person name="Wilhelm S."/>
            <person name="Wittmann C."/>
            <person name="Bloecker H."/>
            <person name="Puehler A."/>
            <person name="Mueller R."/>
        </authorList>
    </citation>
    <scope>NUCLEOTIDE SEQUENCE [LARGE SCALE GENOMIC DNA]</scope>
    <source>
        <strain>So ce56</strain>
    </source>
</reference>
<keyword id="KW-0963">Cytoplasm</keyword>
<keyword id="KW-0413">Isomerase</keyword>
<keyword id="KW-0627">Porphyrin biosynthesis</keyword>
<keyword id="KW-0663">Pyridoxal phosphate</keyword>
<keyword id="KW-1185">Reference proteome</keyword>
<evidence type="ECO:0000255" key="1">
    <source>
        <dbReference type="HAMAP-Rule" id="MF_00375"/>
    </source>
</evidence>
<organism>
    <name type="scientific">Sorangium cellulosum (strain So ce56)</name>
    <name type="common">Polyangium cellulosum (strain So ce56)</name>
    <dbReference type="NCBI Taxonomy" id="448385"/>
    <lineage>
        <taxon>Bacteria</taxon>
        <taxon>Pseudomonadati</taxon>
        <taxon>Myxococcota</taxon>
        <taxon>Polyangia</taxon>
        <taxon>Polyangiales</taxon>
        <taxon>Polyangiaceae</taxon>
        <taxon>Sorangium</taxon>
    </lineage>
</organism>
<accession>A9GDD3</accession>
<proteinExistence type="inferred from homology"/>
<dbReference type="EC" id="5.4.3.8" evidence="1"/>
<dbReference type="EMBL" id="AM746676">
    <property type="protein sequence ID" value="CAN99340.1"/>
    <property type="molecule type" value="Genomic_DNA"/>
</dbReference>
<dbReference type="RefSeq" id="WP_012241775.1">
    <property type="nucleotide sequence ID" value="NC_010162.1"/>
</dbReference>
<dbReference type="SMR" id="A9GDD3"/>
<dbReference type="STRING" id="448385.sce9167"/>
<dbReference type="KEGG" id="scl:sce9167"/>
<dbReference type="eggNOG" id="COG0001">
    <property type="taxonomic scope" value="Bacteria"/>
</dbReference>
<dbReference type="HOGENOM" id="CLU_016922_1_5_7"/>
<dbReference type="OrthoDB" id="9801052at2"/>
<dbReference type="BioCyc" id="SCEL448385:SCE_RS46920-MONOMER"/>
<dbReference type="UniPathway" id="UPA00251">
    <property type="reaction ID" value="UER00317"/>
</dbReference>
<dbReference type="Proteomes" id="UP000002139">
    <property type="component" value="Chromosome"/>
</dbReference>
<dbReference type="GO" id="GO:0005737">
    <property type="term" value="C:cytoplasm"/>
    <property type="evidence" value="ECO:0007669"/>
    <property type="project" value="UniProtKB-SubCell"/>
</dbReference>
<dbReference type="GO" id="GO:0042286">
    <property type="term" value="F:glutamate-1-semialdehyde 2,1-aminomutase activity"/>
    <property type="evidence" value="ECO:0007669"/>
    <property type="project" value="UniProtKB-UniRule"/>
</dbReference>
<dbReference type="GO" id="GO:0030170">
    <property type="term" value="F:pyridoxal phosphate binding"/>
    <property type="evidence" value="ECO:0007669"/>
    <property type="project" value="InterPro"/>
</dbReference>
<dbReference type="GO" id="GO:0008483">
    <property type="term" value="F:transaminase activity"/>
    <property type="evidence" value="ECO:0007669"/>
    <property type="project" value="InterPro"/>
</dbReference>
<dbReference type="GO" id="GO:0006782">
    <property type="term" value="P:protoporphyrinogen IX biosynthetic process"/>
    <property type="evidence" value="ECO:0007669"/>
    <property type="project" value="UniProtKB-UniRule"/>
</dbReference>
<dbReference type="CDD" id="cd00610">
    <property type="entry name" value="OAT_like"/>
    <property type="match status" value="1"/>
</dbReference>
<dbReference type="FunFam" id="3.40.640.10:FF:000021">
    <property type="entry name" value="Glutamate-1-semialdehyde 2,1-aminomutase"/>
    <property type="match status" value="1"/>
</dbReference>
<dbReference type="Gene3D" id="3.90.1150.10">
    <property type="entry name" value="Aspartate Aminotransferase, domain 1"/>
    <property type="match status" value="1"/>
</dbReference>
<dbReference type="Gene3D" id="3.40.640.10">
    <property type="entry name" value="Type I PLP-dependent aspartate aminotransferase-like (Major domain)"/>
    <property type="match status" value="1"/>
</dbReference>
<dbReference type="HAMAP" id="MF_00375">
    <property type="entry name" value="HemL_aminotrans_3"/>
    <property type="match status" value="1"/>
</dbReference>
<dbReference type="InterPro" id="IPR004639">
    <property type="entry name" value="4pyrrol_synth_GluAld_NH2Trfase"/>
</dbReference>
<dbReference type="InterPro" id="IPR005814">
    <property type="entry name" value="Aminotrans_3"/>
</dbReference>
<dbReference type="InterPro" id="IPR049704">
    <property type="entry name" value="Aminotrans_3_PPA_site"/>
</dbReference>
<dbReference type="InterPro" id="IPR015424">
    <property type="entry name" value="PyrdxlP-dep_Trfase"/>
</dbReference>
<dbReference type="InterPro" id="IPR015421">
    <property type="entry name" value="PyrdxlP-dep_Trfase_major"/>
</dbReference>
<dbReference type="InterPro" id="IPR015422">
    <property type="entry name" value="PyrdxlP-dep_Trfase_small"/>
</dbReference>
<dbReference type="NCBIfam" id="TIGR00713">
    <property type="entry name" value="hemL"/>
    <property type="match status" value="1"/>
</dbReference>
<dbReference type="NCBIfam" id="NF000818">
    <property type="entry name" value="PRK00062.1"/>
    <property type="match status" value="1"/>
</dbReference>
<dbReference type="PANTHER" id="PTHR43713">
    <property type="entry name" value="GLUTAMATE-1-SEMIALDEHYDE 2,1-AMINOMUTASE"/>
    <property type="match status" value="1"/>
</dbReference>
<dbReference type="PANTHER" id="PTHR43713:SF3">
    <property type="entry name" value="GLUTAMATE-1-SEMIALDEHYDE 2,1-AMINOMUTASE 1, CHLOROPLASTIC-RELATED"/>
    <property type="match status" value="1"/>
</dbReference>
<dbReference type="Pfam" id="PF00202">
    <property type="entry name" value="Aminotran_3"/>
    <property type="match status" value="1"/>
</dbReference>
<dbReference type="SUPFAM" id="SSF53383">
    <property type="entry name" value="PLP-dependent transferases"/>
    <property type="match status" value="1"/>
</dbReference>
<dbReference type="PROSITE" id="PS00600">
    <property type="entry name" value="AA_TRANSFER_CLASS_3"/>
    <property type="match status" value="1"/>
</dbReference>
<feature type="chain" id="PRO_1000079936" description="Glutamate-1-semialdehyde 2,1-aminomutase">
    <location>
        <begin position="1"/>
        <end position="437"/>
    </location>
</feature>
<feature type="modified residue" description="N6-(pyridoxal phosphate)lysine" evidence="1">
    <location>
        <position position="279"/>
    </location>
</feature>
<sequence>MTNATSAPPARADRAPASKALFDRAAAVLPGGVNSPVRAFRAVGGDPLFIARAQGARLFDADGAEYIDYVGSWGPAILGHAHPAVIEAVREAALGGLSFGAPTELEVRFAEKIRELYPSIDMLRCVSSGTEATMSAIRVARGFTRRDAIIKFEGCYHGHADHLLVKAGSGLATFGAPDSAGVPESIARTTLSLPYNDPAALEAAFAARGGDIAAVILEPVVGNMGCVPPEPGFLALVIDLCRKHGALSIFDEVMTGCRLARGGAQERFGLRPDLTTLGKIVGGGMPLAAYGGRADVMRVVSPLGPVYQAGTLSGNPLAVTAGLATLDRLTPALYERLEELGASLEEGLRAAAEGAGAAACVQRVGSMITLFFTKGPVRSWADAATSDTKRFSAFHAAMLARGIYWPPSQYEAAFLSGAHSEEDIERTIAACREALAA</sequence>
<protein>
    <recommendedName>
        <fullName evidence="1">Glutamate-1-semialdehyde 2,1-aminomutase</fullName>
        <shortName evidence="1">GSA</shortName>
        <ecNumber evidence="1">5.4.3.8</ecNumber>
    </recommendedName>
    <alternativeName>
        <fullName evidence="1">Glutamate-1-semialdehyde aminotransferase</fullName>
        <shortName evidence="1">GSA-AT</shortName>
    </alternativeName>
</protein>
<comment type="catalytic activity">
    <reaction evidence="1">
        <text>(S)-4-amino-5-oxopentanoate = 5-aminolevulinate</text>
        <dbReference type="Rhea" id="RHEA:14265"/>
        <dbReference type="ChEBI" id="CHEBI:57501"/>
        <dbReference type="ChEBI" id="CHEBI:356416"/>
        <dbReference type="EC" id="5.4.3.8"/>
    </reaction>
</comment>
<comment type="cofactor">
    <cofactor evidence="1">
        <name>pyridoxal 5'-phosphate</name>
        <dbReference type="ChEBI" id="CHEBI:597326"/>
    </cofactor>
</comment>
<comment type="pathway">
    <text evidence="1">Porphyrin-containing compound metabolism; protoporphyrin-IX biosynthesis; 5-aminolevulinate from L-glutamyl-tRNA(Glu): step 2/2.</text>
</comment>
<comment type="subunit">
    <text evidence="1">Homodimer.</text>
</comment>
<comment type="subcellular location">
    <subcellularLocation>
        <location evidence="1">Cytoplasm</location>
    </subcellularLocation>
</comment>
<comment type="similarity">
    <text evidence="1">Belongs to the class-III pyridoxal-phosphate-dependent aminotransferase family. HemL subfamily.</text>
</comment>
<name>GSA_SORC5</name>